<evidence type="ECO:0000250" key="1"/>
<evidence type="ECO:0000255" key="2">
    <source>
        <dbReference type="HAMAP-Rule" id="MF_01057"/>
    </source>
</evidence>
<protein>
    <recommendedName>
        <fullName evidence="2">tRNA (guanine-N(7)-)-methyltransferase</fullName>
        <ecNumber evidence="2">2.1.1.33</ecNumber>
    </recommendedName>
    <alternativeName>
        <fullName evidence="2">tRNA (guanine(46)-N(7))-methyltransferase</fullName>
    </alternativeName>
    <alternativeName>
        <fullName evidence="2">tRNA(m7G46)-methyltransferase</fullName>
    </alternativeName>
</protein>
<sequence length="227" mass="25673">MEEALKTSHRAIRSFVLRQGRITAAQTRAVAEYLPARQIDAHAEWRDPWNNQRPLMLEIGFGNGEHLAAIAAQRPTWGCIGIEVHTPGVGSLLLQLVEAGTDNVRIVHDDAVTWLKTLPDAILRCIIIQFPDPWPKKRQQKRRLIQPDFAAVLCRLLQPGGELQLATDWADYAGQMLTVLNATPGLQNADADNGYVFRPDNRILTRFERRGQRLGHAVYDLCYRRIP</sequence>
<accession>B7J415</accession>
<dbReference type="EC" id="2.1.1.33" evidence="2"/>
<dbReference type="EMBL" id="CP001219">
    <property type="protein sequence ID" value="ACK78559.1"/>
    <property type="molecule type" value="Genomic_DNA"/>
</dbReference>
<dbReference type="SMR" id="B7J415"/>
<dbReference type="STRING" id="243159.AFE_0271"/>
<dbReference type="PaxDb" id="243159-AFE_0271"/>
<dbReference type="KEGG" id="afr:AFE_0271"/>
<dbReference type="eggNOG" id="COG0220">
    <property type="taxonomic scope" value="Bacteria"/>
</dbReference>
<dbReference type="HOGENOM" id="CLU_050910_0_1_6"/>
<dbReference type="UniPathway" id="UPA00989"/>
<dbReference type="Proteomes" id="UP000001362">
    <property type="component" value="Chromosome"/>
</dbReference>
<dbReference type="GO" id="GO:0043527">
    <property type="term" value="C:tRNA methyltransferase complex"/>
    <property type="evidence" value="ECO:0007669"/>
    <property type="project" value="TreeGrafter"/>
</dbReference>
<dbReference type="GO" id="GO:0008176">
    <property type="term" value="F:tRNA (guanine(46)-N7)-methyltransferase activity"/>
    <property type="evidence" value="ECO:0007669"/>
    <property type="project" value="UniProtKB-UniRule"/>
</dbReference>
<dbReference type="Gene3D" id="3.40.50.150">
    <property type="entry name" value="Vaccinia Virus protein VP39"/>
    <property type="match status" value="1"/>
</dbReference>
<dbReference type="HAMAP" id="MF_01057">
    <property type="entry name" value="tRNA_methyltr_TrmB"/>
    <property type="match status" value="1"/>
</dbReference>
<dbReference type="InterPro" id="IPR029063">
    <property type="entry name" value="SAM-dependent_MTases_sf"/>
</dbReference>
<dbReference type="InterPro" id="IPR003358">
    <property type="entry name" value="tRNA_(Gua-N-7)_MeTrfase_Trmb"/>
</dbReference>
<dbReference type="InterPro" id="IPR055361">
    <property type="entry name" value="tRNA_methyltr_TrmB_bact"/>
</dbReference>
<dbReference type="NCBIfam" id="TIGR00091">
    <property type="entry name" value="tRNA (guanosine(46)-N7)-methyltransferase TrmB"/>
    <property type="match status" value="1"/>
</dbReference>
<dbReference type="PANTHER" id="PTHR23417">
    <property type="entry name" value="3-DEOXY-D-MANNO-OCTULOSONIC-ACID TRANSFERASE/TRNA GUANINE-N 7 - -METHYLTRANSFERASE"/>
    <property type="match status" value="1"/>
</dbReference>
<dbReference type="PANTHER" id="PTHR23417:SF14">
    <property type="entry name" value="PENTACOTRIPEPTIDE-REPEAT REGION OF PRORP DOMAIN-CONTAINING PROTEIN"/>
    <property type="match status" value="1"/>
</dbReference>
<dbReference type="Pfam" id="PF02390">
    <property type="entry name" value="Methyltransf_4"/>
    <property type="match status" value="1"/>
</dbReference>
<dbReference type="SUPFAM" id="SSF53335">
    <property type="entry name" value="S-adenosyl-L-methionine-dependent methyltransferases"/>
    <property type="match status" value="1"/>
</dbReference>
<dbReference type="PROSITE" id="PS51625">
    <property type="entry name" value="SAM_MT_TRMB"/>
    <property type="match status" value="1"/>
</dbReference>
<keyword id="KW-0489">Methyltransferase</keyword>
<keyword id="KW-1185">Reference proteome</keyword>
<keyword id="KW-0949">S-adenosyl-L-methionine</keyword>
<keyword id="KW-0808">Transferase</keyword>
<keyword id="KW-0819">tRNA processing</keyword>
<organism>
    <name type="scientific">Acidithiobacillus ferrooxidans (strain ATCC 23270 / DSM 14882 / CIP 104768 / NCIMB 8455)</name>
    <name type="common">Ferrobacillus ferrooxidans (strain ATCC 23270)</name>
    <dbReference type="NCBI Taxonomy" id="243159"/>
    <lineage>
        <taxon>Bacteria</taxon>
        <taxon>Pseudomonadati</taxon>
        <taxon>Pseudomonadota</taxon>
        <taxon>Acidithiobacillia</taxon>
        <taxon>Acidithiobacillales</taxon>
        <taxon>Acidithiobacillaceae</taxon>
        <taxon>Acidithiobacillus</taxon>
    </lineage>
</organism>
<proteinExistence type="inferred from homology"/>
<feature type="chain" id="PRO_1000213437" description="tRNA (guanine-N(7)-)-methyltransferase">
    <location>
        <begin position="1"/>
        <end position="227"/>
    </location>
</feature>
<feature type="active site" evidence="1">
    <location>
        <position position="132"/>
    </location>
</feature>
<feature type="binding site" evidence="2">
    <location>
        <position position="58"/>
    </location>
    <ligand>
        <name>S-adenosyl-L-methionine</name>
        <dbReference type="ChEBI" id="CHEBI:59789"/>
    </ligand>
</feature>
<feature type="binding site" evidence="2">
    <location>
        <position position="83"/>
    </location>
    <ligand>
        <name>S-adenosyl-L-methionine</name>
        <dbReference type="ChEBI" id="CHEBI:59789"/>
    </ligand>
</feature>
<feature type="binding site" evidence="2">
    <location>
        <position position="110"/>
    </location>
    <ligand>
        <name>S-adenosyl-L-methionine</name>
        <dbReference type="ChEBI" id="CHEBI:59789"/>
    </ligand>
</feature>
<feature type="binding site" evidence="2">
    <location>
        <position position="132"/>
    </location>
    <ligand>
        <name>S-adenosyl-L-methionine</name>
        <dbReference type="ChEBI" id="CHEBI:59789"/>
    </ligand>
</feature>
<feature type="binding site" evidence="2">
    <location>
        <position position="136"/>
    </location>
    <ligand>
        <name>substrate</name>
    </ligand>
</feature>
<feature type="binding site" evidence="2">
    <location>
        <position position="168"/>
    </location>
    <ligand>
        <name>substrate</name>
    </ligand>
</feature>
<feature type="binding site" evidence="2">
    <location>
        <begin position="205"/>
        <end position="208"/>
    </location>
    <ligand>
        <name>substrate</name>
    </ligand>
</feature>
<reference key="1">
    <citation type="journal article" date="2008" name="BMC Genomics">
        <title>Acidithiobacillus ferrooxidans metabolism: from genome sequence to industrial applications.</title>
        <authorList>
            <person name="Valdes J."/>
            <person name="Pedroso I."/>
            <person name="Quatrini R."/>
            <person name="Dodson R.J."/>
            <person name="Tettelin H."/>
            <person name="Blake R. II"/>
            <person name="Eisen J.A."/>
            <person name="Holmes D.S."/>
        </authorList>
    </citation>
    <scope>NUCLEOTIDE SEQUENCE [LARGE SCALE GENOMIC DNA]</scope>
    <source>
        <strain>ATCC 23270 / DSM 14882 / CIP 104768 / NCIMB 8455</strain>
    </source>
</reference>
<gene>
    <name evidence="2" type="primary">trmB</name>
    <name type="ordered locus">AFE_0271</name>
</gene>
<comment type="function">
    <text evidence="2">Catalyzes the formation of N(7)-methylguanine at position 46 (m7G46) in tRNA.</text>
</comment>
<comment type="catalytic activity">
    <reaction evidence="2">
        <text>guanosine(46) in tRNA + S-adenosyl-L-methionine = N(7)-methylguanosine(46) in tRNA + S-adenosyl-L-homocysteine</text>
        <dbReference type="Rhea" id="RHEA:42708"/>
        <dbReference type="Rhea" id="RHEA-COMP:10188"/>
        <dbReference type="Rhea" id="RHEA-COMP:10189"/>
        <dbReference type="ChEBI" id="CHEBI:57856"/>
        <dbReference type="ChEBI" id="CHEBI:59789"/>
        <dbReference type="ChEBI" id="CHEBI:74269"/>
        <dbReference type="ChEBI" id="CHEBI:74480"/>
        <dbReference type="EC" id="2.1.1.33"/>
    </reaction>
</comment>
<comment type="pathway">
    <text evidence="2">tRNA modification; N(7)-methylguanine-tRNA biosynthesis.</text>
</comment>
<comment type="similarity">
    <text evidence="2">Belongs to the class I-like SAM-binding methyltransferase superfamily. TrmB family.</text>
</comment>
<name>TRMB_ACIF2</name>